<protein>
    <recommendedName>
        <fullName evidence="1">NAD kinase</fullName>
        <ecNumber evidence="1">2.7.1.23</ecNumber>
    </recommendedName>
    <alternativeName>
        <fullName evidence="1">ATP-dependent NAD kinase</fullName>
    </alternativeName>
</protein>
<gene>
    <name evidence="1" type="primary">nadK</name>
    <name type="ordered locus">trd_0199</name>
</gene>
<name>NADK_THERP</name>
<proteinExistence type="inferred from homology"/>
<accession>B9KXL1</accession>
<evidence type="ECO:0000255" key="1">
    <source>
        <dbReference type="HAMAP-Rule" id="MF_00361"/>
    </source>
</evidence>
<organism>
    <name type="scientific">Thermomicrobium roseum (strain ATCC 27502 / DSM 5159 / P-2)</name>
    <dbReference type="NCBI Taxonomy" id="309801"/>
    <lineage>
        <taxon>Bacteria</taxon>
        <taxon>Pseudomonadati</taxon>
        <taxon>Thermomicrobiota</taxon>
        <taxon>Thermomicrobia</taxon>
        <taxon>Thermomicrobiales</taxon>
        <taxon>Thermomicrobiaceae</taxon>
        <taxon>Thermomicrobium</taxon>
    </lineage>
</organism>
<dbReference type="EC" id="2.7.1.23" evidence="1"/>
<dbReference type="EMBL" id="CP001275">
    <property type="protein sequence ID" value="ACM06363.1"/>
    <property type="molecule type" value="Genomic_DNA"/>
</dbReference>
<dbReference type="RefSeq" id="WP_012641611.1">
    <property type="nucleotide sequence ID" value="NC_011959.1"/>
</dbReference>
<dbReference type="SMR" id="B9KXL1"/>
<dbReference type="STRING" id="309801.trd_0199"/>
<dbReference type="KEGG" id="tro:trd_0199"/>
<dbReference type="eggNOG" id="COG0061">
    <property type="taxonomic scope" value="Bacteria"/>
</dbReference>
<dbReference type="HOGENOM" id="CLU_008831_0_0_0"/>
<dbReference type="OrthoDB" id="9774737at2"/>
<dbReference type="Proteomes" id="UP000000447">
    <property type="component" value="Chromosome"/>
</dbReference>
<dbReference type="GO" id="GO:0005737">
    <property type="term" value="C:cytoplasm"/>
    <property type="evidence" value="ECO:0007669"/>
    <property type="project" value="UniProtKB-SubCell"/>
</dbReference>
<dbReference type="GO" id="GO:0005524">
    <property type="term" value="F:ATP binding"/>
    <property type="evidence" value="ECO:0007669"/>
    <property type="project" value="UniProtKB-KW"/>
</dbReference>
<dbReference type="GO" id="GO:0046872">
    <property type="term" value="F:metal ion binding"/>
    <property type="evidence" value="ECO:0007669"/>
    <property type="project" value="UniProtKB-UniRule"/>
</dbReference>
<dbReference type="GO" id="GO:0051287">
    <property type="term" value="F:NAD binding"/>
    <property type="evidence" value="ECO:0007669"/>
    <property type="project" value="UniProtKB-ARBA"/>
</dbReference>
<dbReference type="GO" id="GO:0003951">
    <property type="term" value="F:NAD+ kinase activity"/>
    <property type="evidence" value="ECO:0007669"/>
    <property type="project" value="UniProtKB-UniRule"/>
</dbReference>
<dbReference type="GO" id="GO:0019674">
    <property type="term" value="P:NAD metabolic process"/>
    <property type="evidence" value="ECO:0007669"/>
    <property type="project" value="InterPro"/>
</dbReference>
<dbReference type="GO" id="GO:0006741">
    <property type="term" value="P:NADP biosynthetic process"/>
    <property type="evidence" value="ECO:0007669"/>
    <property type="project" value="UniProtKB-UniRule"/>
</dbReference>
<dbReference type="Gene3D" id="3.40.50.10330">
    <property type="entry name" value="Probable inorganic polyphosphate/atp-NAD kinase, domain 1"/>
    <property type="match status" value="1"/>
</dbReference>
<dbReference type="Gene3D" id="2.60.200.30">
    <property type="entry name" value="Probable inorganic polyphosphate/atp-NAD kinase, domain 2"/>
    <property type="match status" value="1"/>
</dbReference>
<dbReference type="HAMAP" id="MF_00361">
    <property type="entry name" value="NAD_kinase"/>
    <property type="match status" value="1"/>
</dbReference>
<dbReference type="InterPro" id="IPR017438">
    <property type="entry name" value="ATP-NAD_kinase_N"/>
</dbReference>
<dbReference type="InterPro" id="IPR017437">
    <property type="entry name" value="ATP-NAD_kinase_PpnK-typ_C"/>
</dbReference>
<dbReference type="InterPro" id="IPR016064">
    <property type="entry name" value="NAD/diacylglycerol_kinase_sf"/>
</dbReference>
<dbReference type="InterPro" id="IPR002504">
    <property type="entry name" value="NADK"/>
</dbReference>
<dbReference type="PANTHER" id="PTHR20275">
    <property type="entry name" value="NAD KINASE"/>
    <property type="match status" value="1"/>
</dbReference>
<dbReference type="PANTHER" id="PTHR20275:SF0">
    <property type="entry name" value="NAD KINASE"/>
    <property type="match status" value="1"/>
</dbReference>
<dbReference type="Pfam" id="PF01513">
    <property type="entry name" value="NAD_kinase"/>
    <property type="match status" value="1"/>
</dbReference>
<dbReference type="Pfam" id="PF20143">
    <property type="entry name" value="NAD_kinase_C"/>
    <property type="match status" value="1"/>
</dbReference>
<dbReference type="SUPFAM" id="SSF111331">
    <property type="entry name" value="NAD kinase/diacylglycerol kinase-like"/>
    <property type="match status" value="1"/>
</dbReference>
<feature type="chain" id="PRO_1000192526" description="NAD kinase">
    <location>
        <begin position="1"/>
        <end position="287"/>
    </location>
</feature>
<feature type="active site" description="Proton acceptor" evidence="1">
    <location>
        <position position="56"/>
    </location>
</feature>
<feature type="binding site" evidence="1">
    <location>
        <begin position="56"/>
        <end position="57"/>
    </location>
    <ligand>
        <name>NAD(+)</name>
        <dbReference type="ChEBI" id="CHEBI:57540"/>
    </ligand>
</feature>
<feature type="binding site" evidence="1">
    <location>
        <position position="61"/>
    </location>
    <ligand>
        <name>NAD(+)</name>
        <dbReference type="ChEBI" id="CHEBI:57540"/>
    </ligand>
</feature>
<feature type="binding site" evidence="1">
    <location>
        <begin position="128"/>
        <end position="129"/>
    </location>
    <ligand>
        <name>NAD(+)</name>
        <dbReference type="ChEBI" id="CHEBI:57540"/>
    </ligand>
</feature>
<feature type="binding site" evidence="1">
    <location>
        <position position="156"/>
    </location>
    <ligand>
        <name>NAD(+)</name>
        <dbReference type="ChEBI" id="CHEBI:57540"/>
    </ligand>
</feature>
<sequence>MARRFGVVAAHGKPEAVELADRIQRWLAAHQCQIANEEALPVVWPELDAIIAIGGDGLIMRVAHHYPDVPILGINVGRVGFLALAEREGWERALHDLVHDRYHVQEGPTLAVQLERGRSVLVDAWAINDVVVRAGYQLIEVELYIDGQFVNTYPGDGMIVATPQGSTAYCMAAGGPVLTAGVHGFAVTPICPHSPIRIALVVPEQATIEQVYVSDREARLIIDGEPVASLERGDLVRVRRGKQAFRLVVLPGTNFYEAFRSKFNFQIRPEAQPSRRTRNADTPSGAR</sequence>
<comment type="function">
    <text evidence="1">Involved in the regulation of the intracellular balance of NAD and NADP, and is a key enzyme in the biosynthesis of NADP. Catalyzes specifically the phosphorylation on 2'-hydroxyl of the adenosine moiety of NAD to yield NADP.</text>
</comment>
<comment type="catalytic activity">
    <reaction evidence="1">
        <text>NAD(+) + ATP = ADP + NADP(+) + H(+)</text>
        <dbReference type="Rhea" id="RHEA:18629"/>
        <dbReference type="ChEBI" id="CHEBI:15378"/>
        <dbReference type="ChEBI" id="CHEBI:30616"/>
        <dbReference type="ChEBI" id="CHEBI:57540"/>
        <dbReference type="ChEBI" id="CHEBI:58349"/>
        <dbReference type="ChEBI" id="CHEBI:456216"/>
        <dbReference type="EC" id="2.7.1.23"/>
    </reaction>
</comment>
<comment type="cofactor">
    <cofactor evidence="1">
        <name>a divalent metal cation</name>
        <dbReference type="ChEBI" id="CHEBI:60240"/>
    </cofactor>
</comment>
<comment type="subcellular location">
    <subcellularLocation>
        <location evidence="1">Cytoplasm</location>
    </subcellularLocation>
</comment>
<comment type="similarity">
    <text evidence="1">Belongs to the NAD kinase family.</text>
</comment>
<reference key="1">
    <citation type="journal article" date="2009" name="PLoS ONE">
        <title>Complete genome sequence of the aerobic CO-oxidizing thermophile Thermomicrobium roseum.</title>
        <authorList>
            <person name="Wu D."/>
            <person name="Raymond J."/>
            <person name="Wu M."/>
            <person name="Chatterji S."/>
            <person name="Ren Q."/>
            <person name="Graham J.E."/>
            <person name="Bryant D.A."/>
            <person name="Robb F."/>
            <person name="Colman A."/>
            <person name="Tallon L.J."/>
            <person name="Badger J.H."/>
            <person name="Madupu R."/>
            <person name="Ward N.L."/>
            <person name="Eisen J.A."/>
        </authorList>
    </citation>
    <scope>NUCLEOTIDE SEQUENCE [LARGE SCALE GENOMIC DNA]</scope>
    <source>
        <strain>ATCC 27502 / DSM 5159 / P-2</strain>
    </source>
</reference>
<keyword id="KW-0067">ATP-binding</keyword>
<keyword id="KW-0963">Cytoplasm</keyword>
<keyword id="KW-0418">Kinase</keyword>
<keyword id="KW-0520">NAD</keyword>
<keyword id="KW-0521">NADP</keyword>
<keyword id="KW-0547">Nucleotide-binding</keyword>
<keyword id="KW-1185">Reference proteome</keyword>
<keyword id="KW-0808">Transferase</keyword>